<comment type="function">
    <text evidence="2">Cell-protective protein that neutralizes the intracellular lysis capacity of phospholipase A1 through a direct interaction with the enzyme.</text>
</comment>
<reference key="1">
    <citation type="journal article" date="1988" name="J. Bacteriol.">
        <title>Cloning and expression in Escherichia coli of the gene for extracellular phospholipase A1 from Serratia liquefaciens.</title>
        <authorList>
            <person name="Givskov M."/>
            <person name="Olsen L."/>
            <person name="Molin S."/>
        </authorList>
    </citation>
    <scope>NUCLEOTIDE SEQUENCE [GENOMIC DNA]</scope>
</reference>
<reference key="2">
    <citation type="journal article" date="1993" name="Mol. Microbiol.">
        <title>Secretion of Serratia liquefaciens phospholipase from Escherichia coli.</title>
        <authorList>
            <person name="Givskov M."/>
            <person name="Molin S."/>
        </authorList>
    </citation>
    <scope>FUNCTION</scope>
</reference>
<sequence>MPEGRRLRRALAIALLALVAVTGLLMMAKEQQMGQEISPFDGHSNLALAQAVARGDTQGIHAQATQDRLRERGDRQVTLLQWAVLSQQPDSVQALLDLGADPAAAGLDGNSALHTAAMLQDAQYLRLLLAEGAQMNVRNAVTGATPLAAAVLAGREEQLRLLLAAGADTTLSDRLGDTPLHLAAKINRRTWRCCCCRPGPMPGRATSRASRSSFTSRKRRRICRMTN</sequence>
<dbReference type="EMBL" id="M23640">
    <property type="status" value="NOT_ANNOTATED_CDS"/>
    <property type="molecule type" value="mRNA"/>
</dbReference>
<dbReference type="PIR" id="C31390">
    <property type="entry name" value="C31390"/>
</dbReference>
<dbReference type="SMR" id="P18954"/>
<dbReference type="Gene3D" id="1.25.40.20">
    <property type="entry name" value="Ankyrin repeat-containing domain"/>
    <property type="match status" value="1"/>
</dbReference>
<dbReference type="InterPro" id="IPR002110">
    <property type="entry name" value="Ankyrin_rpt"/>
</dbReference>
<dbReference type="InterPro" id="IPR036770">
    <property type="entry name" value="Ankyrin_rpt-contain_sf"/>
</dbReference>
<dbReference type="PANTHER" id="PTHR24171">
    <property type="entry name" value="ANKYRIN REPEAT DOMAIN-CONTAINING PROTEIN 39-RELATED"/>
    <property type="match status" value="1"/>
</dbReference>
<dbReference type="Pfam" id="PF12796">
    <property type="entry name" value="Ank_2"/>
    <property type="match status" value="1"/>
</dbReference>
<dbReference type="SMART" id="SM00248">
    <property type="entry name" value="ANK"/>
    <property type="match status" value="3"/>
</dbReference>
<dbReference type="SUPFAM" id="SSF48403">
    <property type="entry name" value="Ankyrin repeat"/>
    <property type="match status" value="1"/>
</dbReference>
<dbReference type="PROSITE" id="PS50297">
    <property type="entry name" value="ANK_REP_REGION"/>
    <property type="match status" value="1"/>
</dbReference>
<dbReference type="PROSITE" id="PS50088">
    <property type="entry name" value="ANK_REPEAT"/>
    <property type="match status" value="2"/>
</dbReference>
<accession>P18954</accession>
<proteinExistence type="evidence at transcript level"/>
<evidence type="ECO:0000255" key="1"/>
<evidence type="ECO:0000269" key="2">
    <source>
    </source>
</evidence>
<feature type="signal peptide" evidence="1">
    <location>
        <begin position="1"/>
        <end position="35"/>
    </location>
</feature>
<feature type="chain" id="PRO_0000001624" description="Protein PhlB">
    <location>
        <begin position="36"/>
        <end position="227"/>
    </location>
</feature>
<feature type="repeat" description="ANK 1">
    <location>
        <begin position="75"/>
        <end position="104"/>
    </location>
</feature>
<feature type="repeat" description="ANK 2">
    <location>
        <begin position="108"/>
        <end position="137"/>
    </location>
</feature>
<feature type="repeat" description="ANK 3">
    <location>
        <begin position="142"/>
        <end position="171"/>
    </location>
</feature>
<feature type="repeat" description="ANK 4">
    <location>
        <begin position="175"/>
        <end position="204"/>
    </location>
</feature>
<gene>
    <name type="primary">phlB</name>
</gene>
<keyword id="KW-0040">ANK repeat</keyword>
<keyword id="KW-0677">Repeat</keyword>
<keyword id="KW-0732">Signal</keyword>
<protein>
    <recommendedName>
        <fullName>Protein PhlB</fullName>
    </recommendedName>
</protein>
<name>PHLB_SERLI</name>
<organism>
    <name type="scientific">Serratia liquefaciens</name>
    <dbReference type="NCBI Taxonomy" id="614"/>
    <lineage>
        <taxon>Bacteria</taxon>
        <taxon>Pseudomonadati</taxon>
        <taxon>Pseudomonadota</taxon>
        <taxon>Gammaproteobacteria</taxon>
        <taxon>Enterobacterales</taxon>
        <taxon>Yersiniaceae</taxon>
        <taxon>Serratia</taxon>
    </lineage>
</organism>